<gene>
    <name evidence="1" type="primary">tmk</name>
    <name type="ordered locus">Swit_0484</name>
</gene>
<accession>A5V3I6</accession>
<keyword id="KW-0067">ATP-binding</keyword>
<keyword id="KW-0418">Kinase</keyword>
<keyword id="KW-0545">Nucleotide biosynthesis</keyword>
<keyword id="KW-0547">Nucleotide-binding</keyword>
<keyword id="KW-1185">Reference proteome</keyword>
<keyword id="KW-0808">Transferase</keyword>
<comment type="function">
    <text evidence="1">Phosphorylation of dTMP to form dTDP in both de novo and salvage pathways of dTTP synthesis.</text>
</comment>
<comment type="catalytic activity">
    <reaction evidence="1">
        <text>dTMP + ATP = dTDP + ADP</text>
        <dbReference type="Rhea" id="RHEA:13517"/>
        <dbReference type="ChEBI" id="CHEBI:30616"/>
        <dbReference type="ChEBI" id="CHEBI:58369"/>
        <dbReference type="ChEBI" id="CHEBI:63528"/>
        <dbReference type="ChEBI" id="CHEBI:456216"/>
        <dbReference type="EC" id="2.7.4.9"/>
    </reaction>
</comment>
<comment type="similarity">
    <text evidence="1">Belongs to the thymidylate kinase family.</text>
</comment>
<proteinExistence type="inferred from homology"/>
<dbReference type="EC" id="2.7.4.9" evidence="1"/>
<dbReference type="EMBL" id="CP000699">
    <property type="protein sequence ID" value="ABQ66852.1"/>
    <property type="molecule type" value="Genomic_DNA"/>
</dbReference>
<dbReference type="SMR" id="A5V3I6"/>
<dbReference type="STRING" id="392499.Swit_0484"/>
<dbReference type="PaxDb" id="392499-Swit_0484"/>
<dbReference type="KEGG" id="swi:Swit_0484"/>
<dbReference type="eggNOG" id="COG0125">
    <property type="taxonomic scope" value="Bacteria"/>
</dbReference>
<dbReference type="HOGENOM" id="CLU_049131_0_0_5"/>
<dbReference type="OrthoDB" id="9774907at2"/>
<dbReference type="Proteomes" id="UP000001989">
    <property type="component" value="Chromosome"/>
</dbReference>
<dbReference type="GO" id="GO:0005829">
    <property type="term" value="C:cytosol"/>
    <property type="evidence" value="ECO:0007669"/>
    <property type="project" value="TreeGrafter"/>
</dbReference>
<dbReference type="GO" id="GO:0005524">
    <property type="term" value="F:ATP binding"/>
    <property type="evidence" value="ECO:0007669"/>
    <property type="project" value="UniProtKB-UniRule"/>
</dbReference>
<dbReference type="GO" id="GO:0004798">
    <property type="term" value="F:dTMP kinase activity"/>
    <property type="evidence" value="ECO:0007669"/>
    <property type="project" value="UniProtKB-UniRule"/>
</dbReference>
<dbReference type="GO" id="GO:0006233">
    <property type="term" value="P:dTDP biosynthetic process"/>
    <property type="evidence" value="ECO:0007669"/>
    <property type="project" value="InterPro"/>
</dbReference>
<dbReference type="GO" id="GO:0006235">
    <property type="term" value="P:dTTP biosynthetic process"/>
    <property type="evidence" value="ECO:0007669"/>
    <property type="project" value="UniProtKB-UniRule"/>
</dbReference>
<dbReference type="GO" id="GO:0006227">
    <property type="term" value="P:dUDP biosynthetic process"/>
    <property type="evidence" value="ECO:0007669"/>
    <property type="project" value="TreeGrafter"/>
</dbReference>
<dbReference type="CDD" id="cd01672">
    <property type="entry name" value="TMPK"/>
    <property type="match status" value="1"/>
</dbReference>
<dbReference type="FunFam" id="3.40.50.300:FF:000225">
    <property type="entry name" value="Thymidylate kinase"/>
    <property type="match status" value="1"/>
</dbReference>
<dbReference type="Gene3D" id="3.40.50.300">
    <property type="entry name" value="P-loop containing nucleotide triphosphate hydrolases"/>
    <property type="match status" value="1"/>
</dbReference>
<dbReference type="HAMAP" id="MF_00165">
    <property type="entry name" value="Thymidylate_kinase"/>
    <property type="match status" value="1"/>
</dbReference>
<dbReference type="InterPro" id="IPR027417">
    <property type="entry name" value="P-loop_NTPase"/>
</dbReference>
<dbReference type="InterPro" id="IPR039430">
    <property type="entry name" value="Thymidylate_kin-like_dom"/>
</dbReference>
<dbReference type="InterPro" id="IPR018095">
    <property type="entry name" value="Thymidylate_kin_CS"/>
</dbReference>
<dbReference type="InterPro" id="IPR018094">
    <property type="entry name" value="Thymidylate_kinase"/>
</dbReference>
<dbReference type="NCBIfam" id="TIGR00041">
    <property type="entry name" value="DTMP_kinase"/>
    <property type="match status" value="1"/>
</dbReference>
<dbReference type="PANTHER" id="PTHR10344">
    <property type="entry name" value="THYMIDYLATE KINASE"/>
    <property type="match status" value="1"/>
</dbReference>
<dbReference type="PANTHER" id="PTHR10344:SF4">
    <property type="entry name" value="UMP-CMP KINASE 2, MITOCHONDRIAL"/>
    <property type="match status" value="1"/>
</dbReference>
<dbReference type="Pfam" id="PF02223">
    <property type="entry name" value="Thymidylate_kin"/>
    <property type="match status" value="1"/>
</dbReference>
<dbReference type="SUPFAM" id="SSF52540">
    <property type="entry name" value="P-loop containing nucleoside triphosphate hydrolases"/>
    <property type="match status" value="1"/>
</dbReference>
<dbReference type="PROSITE" id="PS01331">
    <property type="entry name" value="THYMIDYLATE_KINASE"/>
    <property type="match status" value="1"/>
</dbReference>
<protein>
    <recommendedName>
        <fullName evidence="1">Thymidylate kinase</fullName>
        <ecNumber evidence="1">2.7.4.9</ecNumber>
    </recommendedName>
    <alternativeName>
        <fullName evidence="1">dTMP kinase</fullName>
    </alternativeName>
</protein>
<name>KTHY_RHIWR</name>
<feature type="chain" id="PRO_1000058258" description="Thymidylate kinase">
    <location>
        <begin position="1"/>
        <end position="208"/>
    </location>
</feature>
<feature type="binding site" evidence="1">
    <location>
        <begin position="10"/>
        <end position="17"/>
    </location>
    <ligand>
        <name>ATP</name>
        <dbReference type="ChEBI" id="CHEBI:30616"/>
    </ligand>
</feature>
<sequence length="208" mass="22345">MPGRFITLEGGEGVGKSTQAKALAAALRARGLDVVETREPGGSDGAEAIRRLLLEGAADRWNARAEALLFAAARADHVARTIRPAIEAGRWVVCDRFLDSSIAYQGGADGLGDEAIRTLHAIGSAGYLPDRTLLLDMPVFDAAFRQAEAGIANSDRFEKRDEAFHDRVADSFRRIAAQEPARIRTINAQGSPQEVTARLIEALADLLP</sequence>
<evidence type="ECO:0000255" key="1">
    <source>
        <dbReference type="HAMAP-Rule" id="MF_00165"/>
    </source>
</evidence>
<organism>
    <name type="scientific">Rhizorhabdus wittichii (strain DSM 6014 / CCUG 31198 / JCM 15750 / NBRC 105917 / EY 4224 / RW1)</name>
    <name type="common">Sphingomonas wittichii</name>
    <dbReference type="NCBI Taxonomy" id="392499"/>
    <lineage>
        <taxon>Bacteria</taxon>
        <taxon>Pseudomonadati</taxon>
        <taxon>Pseudomonadota</taxon>
        <taxon>Alphaproteobacteria</taxon>
        <taxon>Sphingomonadales</taxon>
        <taxon>Sphingomonadaceae</taxon>
        <taxon>Rhizorhabdus</taxon>
    </lineage>
</organism>
<reference key="1">
    <citation type="journal article" date="2010" name="J. Bacteriol.">
        <title>Genome sequence of the dioxin-mineralizing bacterium Sphingomonas wittichii RW1.</title>
        <authorList>
            <person name="Miller T.R."/>
            <person name="Delcher A.L."/>
            <person name="Salzberg S.L."/>
            <person name="Saunders E."/>
            <person name="Detter J.C."/>
            <person name="Halden R.U."/>
        </authorList>
    </citation>
    <scope>NUCLEOTIDE SEQUENCE [LARGE SCALE GENOMIC DNA]</scope>
    <source>
        <strain>DSM 6014 / CCUG 31198 / JCM 15750 / NBRC 105917 / EY 4224 / RW1</strain>
    </source>
</reference>